<keyword id="KW-0929">Antimicrobial</keyword>
<keyword id="KW-0903">Direct protein sequencing</keyword>
<keyword id="KW-0295">Fungicide</keyword>
<keyword id="KW-0646">Protease inhibitor</keyword>
<keyword id="KW-0722">Serine protease inhibitor</keyword>
<protein>
    <recommendedName>
        <fullName>Antifungal protein</fullName>
    </recommendedName>
    <alternativeName>
        <fullName>Psc-AFP</fullName>
    </alternativeName>
</protein>
<feature type="chain" id="PRO_0000282942" description="Antifungal protein">
    <location>
        <begin position="1"/>
        <end position="20" status="greater than"/>
    </location>
</feature>
<feature type="non-terminal residue" evidence="3">
    <location>
        <position position="20"/>
    </location>
</feature>
<reference evidence="4" key="1">
    <citation type="journal article" date="2006" name="Peptides">
        <title>Psc-AFP, an antifungal protein with trypsin inhibitor activity from Psoralea corylifolia seeds.</title>
        <authorList>
            <person name="Yang X."/>
            <person name="Li J."/>
            <person name="Wang X."/>
            <person name="Fang W."/>
            <person name="Bidochka M.J."/>
            <person name="She R."/>
            <person name="Xiao Y."/>
            <person name="Pei Y."/>
        </authorList>
    </citation>
    <scope>PROTEIN SEQUENCE</scope>
    <source>
        <tissue evidence="2">Seed</tissue>
    </source>
</reference>
<dbReference type="GO" id="GO:0004867">
    <property type="term" value="F:serine-type endopeptidase inhibitor activity"/>
    <property type="evidence" value="ECO:0000314"/>
    <property type="project" value="UniProtKB"/>
</dbReference>
<dbReference type="GO" id="GO:0050832">
    <property type="term" value="P:defense response to fungus"/>
    <property type="evidence" value="ECO:0000314"/>
    <property type="project" value="UniProtKB"/>
</dbReference>
<dbReference type="GO" id="GO:0031640">
    <property type="term" value="P:killing of cells of another organism"/>
    <property type="evidence" value="ECO:0007669"/>
    <property type="project" value="UniProtKB-KW"/>
</dbReference>
<comment type="function">
    <text evidence="2">Inhibits soybean trypsin. Has antifungal activity against R.cerealis, A.brassicae and A.niger, and weak antifungal activity against F.oxysporum.</text>
</comment>
<comment type="similarity">
    <text evidence="1">Belongs to the protease inhibitor I3 (leguminous Kunitz-type inhibitor) family.</text>
</comment>
<accession>P85102</accession>
<evidence type="ECO:0000255" key="1"/>
<evidence type="ECO:0000269" key="2">
    <source>
    </source>
</evidence>
<evidence type="ECO:0000303" key="3">
    <source>
    </source>
</evidence>
<evidence type="ECO:0000305" key="4"/>
<name>AFP_CULCO</name>
<organism>
    <name type="scientific">Cullen corylifolium</name>
    <name type="common">Malaysian scurfpea</name>
    <name type="synonym">Psoralea corylifolia</name>
    <dbReference type="NCBI Taxonomy" id="429560"/>
    <lineage>
        <taxon>Eukaryota</taxon>
        <taxon>Viridiplantae</taxon>
        <taxon>Streptophyta</taxon>
        <taxon>Embryophyta</taxon>
        <taxon>Tracheophyta</taxon>
        <taxon>Spermatophyta</taxon>
        <taxon>Magnoliopsida</taxon>
        <taxon>eudicotyledons</taxon>
        <taxon>Gunneridae</taxon>
        <taxon>Pentapetalae</taxon>
        <taxon>rosids</taxon>
        <taxon>fabids</taxon>
        <taxon>Fabales</taxon>
        <taxon>Fabaceae</taxon>
        <taxon>Papilionoideae</taxon>
        <taxon>50 kb inversion clade</taxon>
        <taxon>NPAAA clade</taxon>
        <taxon>indigoferoid/millettioid clade</taxon>
        <taxon>Psoraleeae</taxon>
        <taxon>Cullen</taxon>
    </lineage>
</organism>
<sequence>EWEPVQNGGSSYYMVPRIWA</sequence>
<proteinExistence type="evidence at protein level"/>